<evidence type="ECO:0000255" key="1">
    <source>
        <dbReference type="HAMAP-Rule" id="MF_01084"/>
    </source>
</evidence>
<reference key="1">
    <citation type="journal article" date="2007" name="Genome Biol.">
        <title>Genome analysis and genome-wide proteomics of Thermococcus gammatolerans, the most radioresistant organism known amongst the Archaea.</title>
        <authorList>
            <person name="Zivanovic Y."/>
            <person name="Armengaud J."/>
            <person name="Lagorce A."/>
            <person name="Leplat C."/>
            <person name="Guerin P."/>
            <person name="Dutertre M."/>
            <person name="Anthouard V."/>
            <person name="Forterre P."/>
            <person name="Wincker P."/>
            <person name="Confalonieri F."/>
        </authorList>
    </citation>
    <scope>NUCLEOTIDE SEQUENCE [LARGE SCALE GENOMIC DNA]</scope>
    <source>
        <strain>DSM 15229 / JCM 11827 / EJ3</strain>
    </source>
</reference>
<organism>
    <name type="scientific">Thermococcus gammatolerans (strain DSM 15229 / JCM 11827 / EJ3)</name>
    <dbReference type="NCBI Taxonomy" id="593117"/>
    <lineage>
        <taxon>Archaea</taxon>
        <taxon>Methanobacteriati</taxon>
        <taxon>Methanobacteriota</taxon>
        <taxon>Thermococci</taxon>
        <taxon>Thermococcales</taxon>
        <taxon>Thermococcaceae</taxon>
        <taxon>Thermococcus</taxon>
    </lineage>
</organism>
<feature type="chain" id="PRO_1000213526" description="Diphthine synthase">
    <location>
        <begin position="1"/>
        <end position="264"/>
    </location>
</feature>
<feature type="binding site" evidence="1">
    <location>
        <position position="10"/>
    </location>
    <ligand>
        <name>S-adenosyl-L-methionine</name>
        <dbReference type="ChEBI" id="CHEBI:59789"/>
    </ligand>
</feature>
<feature type="binding site" evidence="1">
    <location>
        <position position="87"/>
    </location>
    <ligand>
        <name>S-adenosyl-L-methionine</name>
        <dbReference type="ChEBI" id="CHEBI:59789"/>
    </ligand>
</feature>
<feature type="binding site" evidence="1">
    <location>
        <position position="90"/>
    </location>
    <ligand>
        <name>S-adenosyl-L-methionine</name>
        <dbReference type="ChEBI" id="CHEBI:59789"/>
    </ligand>
</feature>
<feature type="binding site" evidence="1">
    <location>
        <begin position="115"/>
        <end position="116"/>
    </location>
    <ligand>
        <name>S-adenosyl-L-methionine</name>
        <dbReference type="ChEBI" id="CHEBI:59789"/>
    </ligand>
</feature>
<feature type="binding site" evidence="1">
    <location>
        <position position="166"/>
    </location>
    <ligand>
        <name>S-adenosyl-L-methionine</name>
        <dbReference type="ChEBI" id="CHEBI:59789"/>
    </ligand>
</feature>
<feature type="binding site" evidence="1">
    <location>
        <position position="209"/>
    </location>
    <ligand>
        <name>S-adenosyl-L-methionine</name>
        <dbReference type="ChEBI" id="CHEBI:59789"/>
    </ligand>
</feature>
<feature type="binding site" evidence="1">
    <location>
        <position position="234"/>
    </location>
    <ligand>
        <name>S-adenosyl-L-methionine</name>
        <dbReference type="ChEBI" id="CHEBI:59789"/>
    </ligand>
</feature>
<proteinExistence type="inferred from homology"/>
<gene>
    <name evidence="1" type="primary">dphB</name>
    <name type="ordered locus">TGAM_0314</name>
</gene>
<dbReference type="EC" id="2.1.1.98" evidence="1"/>
<dbReference type="EMBL" id="CP001398">
    <property type="protein sequence ID" value="ACS32816.1"/>
    <property type="molecule type" value="Genomic_DNA"/>
</dbReference>
<dbReference type="RefSeq" id="WP_015857935.1">
    <property type="nucleotide sequence ID" value="NC_012804.1"/>
</dbReference>
<dbReference type="SMR" id="C5A3K4"/>
<dbReference type="STRING" id="593117.TGAM_0314"/>
<dbReference type="PaxDb" id="593117-TGAM_0314"/>
<dbReference type="GeneID" id="7987780"/>
<dbReference type="KEGG" id="tga:TGAM_0314"/>
<dbReference type="PATRIC" id="fig|593117.10.peg.313"/>
<dbReference type="eggNOG" id="arCOG04161">
    <property type="taxonomic scope" value="Archaea"/>
</dbReference>
<dbReference type="HOGENOM" id="CLU_066040_0_0_2"/>
<dbReference type="OrthoDB" id="39139at2157"/>
<dbReference type="UniPathway" id="UPA00559"/>
<dbReference type="Proteomes" id="UP000001488">
    <property type="component" value="Chromosome"/>
</dbReference>
<dbReference type="GO" id="GO:0004164">
    <property type="term" value="F:diphthine synthase activity"/>
    <property type="evidence" value="ECO:0007669"/>
    <property type="project" value="UniProtKB-UniRule"/>
</dbReference>
<dbReference type="GO" id="GO:0032259">
    <property type="term" value="P:methylation"/>
    <property type="evidence" value="ECO:0007669"/>
    <property type="project" value="UniProtKB-KW"/>
</dbReference>
<dbReference type="GO" id="GO:0017183">
    <property type="term" value="P:protein histidyl modification to diphthamide"/>
    <property type="evidence" value="ECO:0007669"/>
    <property type="project" value="UniProtKB-UniRule"/>
</dbReference>
<dbReference type="CDD" id="cd11647">
    <property type="entry name" value="DHP5_DphB"/>
    <property type="match status" value="1"/>
</dbReference>
<dbReference type="FunFam" id="3.30.950.10:FF:000004">
    <property type="entry name" value="Diphthine synthase putative"/>
    <property type="match status" value="1"/>
</dbReference>
<dbReference type="FunFam" id="3.40.1010.10:FF:000004">
    <property type="entry name" value="Putative diphthine synthase"/>
    <property type="match status" value="1"/>
</dbReference>
<dbReference type="Gene3D" id="3.40.1010.10">
    <property type="entry name" value="Cobalt-precorrin-4 Transmethylase, Domain 1"/>
    <property type="match status" value="1"/>
</dbReference>
<dbReference type="Gene3D" id="3.30.950.10">
    <property type="entry name" value="Methyltransferase, Cobalt-precorrin-4 Transmethylase, Domain 2"/>
    <property type="match status" value="1"/>
</dbReference>
<dbReference type="HAMAP" id="MF_01084">
    <property type="entry name" value="Diphthine_synth"/>
    <property type="match status" value="1"/>
</dbReference>
<dbReference type="InterPro" id="IPR000878">
    <property type="entry name" value="4pyrrol_Mease"/>
</dbReference>
<dbReference type="InterPro" id="IPR035996">
    <property type="entry name" value="4pyrrol_Methylase_sf"/>
</dbReference>
<dbReference type="InterPro" id="IPR014777">
    <property type="entry name" value="4pyrrole_Mease_sub1"/>
</dbReference>
<dbReference type="InterPro" id="IPR014776">
    <property type="entry name" value="4pyrrole_Mease_sub2"/>
</dbReference>
<dbReference type="InterPro" id="IPR004551">
    <property type="entry name" value="Dphthn_synthase"/>
</dbReference>
<dbReference type="NCBIfam" id="TIGR00522">
    <property type="entry name" value="dph5"/>
    <property type="match status" value="1"/>
</dbReference>
<dbReference type="PANTHER" id="PTHR10882:SF0">
    <property type="entry name" value="DIPHTHINE METHYL ESTER SYNTHASE"/>
    <property type="match status" value="1"/>
</dbReference>
<dbReference type="PANTHER" id="PTHR10882">
    <property type="entry name" value="DIPHTHINE SYNTHASE"/>
    <property type="match status" value="1"/>
</dbReference>
<dbReference type="Pfam" id="PF00590">
    <property type="entry name" value="TP_methylase"/>
    <property type="match status" value="1"/>
</dbReference>
<dbReference type="PIRSF" id="PIRSF036432">
    <property type="entry name" value="Diphthine_synth"/>
    <property type="match status" value="1"/>
</dbReference>
<dbReference type="SUPFAM" id="SSF53790">
    <property type="entry name" value="Tetrapyrrole methylase"/>
    <property type="match status" value="1"/>
</dbReference>
<keyword id="KW-0489">Methyltransferase</keyword>
<keyword id="KW-1185">Reference proteome</keyword>
<keyword id="KW-0949">S-adenosyl-L-methionine</keyword>
<keyword id="KW-0808">Transferase</keyword>
<name>DPHB_THEGJ</name>
<comment type="function">
    <text evidence="1">S-adenosyl-L-methionine-dependent methyltransferase that catalyzes the trimethylation of the amino group of the modified target histidine residue in translation elongation factor 2 (EF-2), to form an intermediate called diphthine. The three successive methylation reactions represent the second step of diphthamide biosynthesis.</text>
</comment>
<comment type="catalytic activity">
    <reaction evidence="1">
        <text>2-[(3S)-amino-3-carboxypropyl]-L-histidyl-[translation elongation factor 2] + 3 S-adenosyl-L-methionine = diphthine-[translation elongation factor 2] + 3 S-adenosyl-L-homocysteine + 3 H(+)</text>
        <dbReference type="Rhea" id="RHEA:36415"/>
        <dbReference type="Rhea" id="RHEA-COMP:9749"/>
        <dbReference type="Rhea" id="RHEA-COMP:10172"/>
        <dbReference type="ChEBI" id="CHEBI:15378"/>
        <dbReference type="ChEBI" id="CHEBI:57856"/>
        <dbReference type="ChEBI" id="CHEBI:59789"/>
        <dbReference type="ChEBI" id="CHEBI:73995"/>
        <dbReference type="ChEBI" id="CHEBI:82696"/>
        <dbReference type="EC" id="2.1.1.98"/>
    </reaction>
</comment>
<comment type="pathway">
    <text evidence="1">Protein modification; peptidyl-diphthamide biosynthesis.</text>
</comment>
<comment type="subunit">
    <text evidence="1">Homodimer.</text>
</comment>
<comment type="similarity">
    <text evidence="1">Belongs to the diphthine synthase family.</text>
</comment>
<sequence length="264" mass="29757">MALYFIGLGLYDERDITLKGLKTARKCDKIFAEFYTSLLAGTTMERIEGLIGKPIIRLSREDVELNFEKIVLPEAKEKDVAFLTAGDPMVATTHSDLRIRAKKAGVESYVIHAPSIYSAVAVTGLQIYKFGKSATVAYPERNWFPTSYYDVIKENRERGLHTLLFLDIKAEQNRYMTANEAMEILLQVEDMKKEGIFTPETLVVVLARAGSLNPTIRAGYVKDMIHEDFGRQPHVLIVPGRLHVVEAEYLVEFAGAPEEILEEV</sequence>
<accession>C5A3K4</accession>
<protein>
    <recommendedName>
        <fullName evidence="1">Diphthine synthase</fullName>
        <ecNumber evidence="1">2.1.1.98</ecNumber>
    </recommendedName>
    <alternativeName>
        <fullName evidence="1">Diphthamide biosynthesis methyltransferase</fullName>
    </alternativeName>
</protein>